<reference key="1">
    <citation type="journal article" date="2006" name="Theor. Appl. Genet.">
        <title>Complete chloroplast genome sequences of Solanum bulbocastanum, Solanum lycopersicum and comparative analyses with other Solanaceae genomes.</title>
        <authorList>
            <person name="Daniell H."/>
            <person name="Lee S.-B."/>
            <person name="Grevich J."/>
            <person name="Saski C."/>
            <person name="Quesada-Vargas T."/>
            <person name="Guda C."/>
            <person name="Tomkins J."/>
            <person name="Jansen R.K."/>
        </authorList>
    </citation>
    <scope>NUCLEOTIDE SEQUENCE [LARGE SCALE GENOMIC DNA]</scope>
    <source>
        <strain>cv. LA3023</strain>
    </source>
</reference>
<reference key="2">
    <citation type="journal article" date="2006" name="J. Mol. Evol.">
        <title>Sequence of the tomato chloroplast DNA and evolutionary comparison of solanaceous plastid genomes.</title>
        <authorList>
            <person name="Kahlau S."/>
            <person name="Aspinall S."/>
            <person name="Gray J.C."/>
            <person name="Bock R."/>
        </authorList>
    </citation>
    <scope>NUCLEOTIDE SEQUENCE [LARGE SCALE GENOMIC DNA]</scope>
    <source>
        <strain>cv. IPA-6</strain>
    </source>
</reference>
<dbReference type="EMBL" id="DQ347959">
    <property type="protein sequence ID" value="ABC56350.1"/>
    <property type="molecule type" value="Genomic_DNA"/>
</dbReference>
<dbReference type="EMBL" id="AM087200">
    <property type="protein sequence ID" value="CAJ32444.1"/>
    <property type="molecule type" value="Genomic_DNA"/>
</dbReference>
<dbReference type="RefSeq" id="AP_004978.1">
    <property type="nucleotide sequence ID" value="AC_000188.1"/>
</dbReference>
<dbReference type="RefSeq" id="YP_008563138.1">
    <property type="nucleotide sequence ID" value="NC_007898.3"/>
</dbReference>
<dbReference type="SMR" id="Q2MI51"/>
<dbReference type="FunCoup" id="Q2MI51">
    <property type="interactions" value="14"/>
</dbReference>
<dbReference type="STRING" id="4081.Q2MI51"/>
<dbReference type="PaxDb" id="4081-Solyc01g017340.1.1"/>
<dbReference type="GeneID" id="3950428"/>
<dbReference type="KEGG" id="sly:3950428"/>
<dbReference type="eggNOG" id="ENOG502QU0T">
    <property type="taxonomic scope" value="Eukaryota"/>
</dbReference>
<dbReference type="InParanoid" id="Q2MI51"/>
<dbReference type="OrthoDB" id="1640at2759"/>
<dbReference type="Proteomes" id="UP000004994">
    <property type="component" value="Chloroplast"/>
</dbReference>
<dbReference type="ExpressionAtlas" id="Q2MI51">
    <property type="expression patterns" value="baseline"/>
</dbReference>
<dbReference type="GO" id="GO:0009535">
    <property type="term" value="C:chloroplast thylakoid membrane"/>
    <property type="evidence" value="ECO:0007669"/>
    <property type="project" value="UniProtKB-SubCell"/>
</dbReference>
<dbReference type="GO" id="GO:0020037">
    <property type="term" value="F:heme binding"/>
    <property type="evidence" value="ECO:0007669"/>
    <property type="project" value="InterPro"/>
</dbReference>
<dbReference type="GO" id="GO:0017004">
    <property type="term" value="P:cytochrome complex assembly"/>
    <property type="evidence" value="ECO:0007669"/>
    <property type="project" value="UniProtKB-UniRule"/>
</dbReference>
<dbReference type="HAMAP" id="MF_01391">
    <property type="entry name" value="CytC_CcsA"/>
    <property type="match status" value="1"/>
</dbReference>
<dbReference type="InterPro" id="IPR002541">
    <property type="entry name" value="Cyt_c_assembly"/>
</dbReference>
<dbReference type="InterPro" id="IPR017562">
    <property type="entry name" value="Cyt_c_biogenesis_CcsA"/>
</dbReference>
<dbReference type="InterPro" id="IPR045062">
    <property type="entry name" value="Cyt_c_biogenesis_CcsA/CcmC"/>
</dbReference>
<dbReference type="NCBIfam" id="TIGR03144">
    <property type="entry name" value="cytochr_II_ccsB"/>
    <property type="match status" value="1"/>
</dbReference>
<dbReference type="PANTHER" id="PTHR30071:SF1">
    <property type="entry name" value="CYTOCHROME B_B6 PROTEIN-RELATED"/>
    <property type="match status" value="1"/>
</dbReference>
<dbReference type="PANTHER" id="PTHR30071">
    <property type="entry name" value="HEME EXPORTER PROTEIN C"/>
    <property type="match status" value="1"/>
</dbReference>
<dbReference type="Pfam" id="PF01578">
    <property type="entry name" value="Cytochrom_C_asm"/>
    <property type="match status" value="1"/>
</dbReference>
<comment type="function">
    <text evidence="1">Required during biogenesis of c-type cytochromes (cytochrome c6 and cytochrome f) at the step of heme attachment.</text>
</comment>
<comment type="subunit">
    <text evidence="1">May interact with Ccs1.</text>
</comment>
<comment type="subcellular location">
    <subcellularLocation>
        <location evidence="1">Plastid</location>
        <location evidence="1">Chloroplast thylakoid membrane</location>
        <topology evidence="1">Multi-pass membrane protein</topology>
    </subcellularLocation>
</comment>
<comment type="similarity">
    <text evidence="1">Belongs to the CcmF/CycK/Ccl1/NrfE/CcsA family.</text>
</comment>
<gene>
    <name evidence="1" type="primary">ccsA</name>
</gene>
<keyword id="KW-0150">Chloroplast</keyword>
<keyword id="KW-0201">Cytochrome c-type biogenesis</keyword>
<keyword id="KW-0472">Membrane</keyword>
<keyword id="KW-0934">Plastid</keyword>
<keyword id="KW-1185">Reference proteome</keyword>
<keyword id="KW-0793">Thylakoid</keyword>
<keyword id="KW-0812">Transmembrane</keyword>
<keyword id="KW-1133">Transmembrane helix</keyword>
<feature type="chain" id="PRO_0000277425" description="Cytochrome c biogenesis protein CcsA">
    <location>
        <begin position="1"/>
        <end position="313"/>
    </location>
</feature>
<feature type="transmembrane region" description="Helical" evidence="1">
    <location>
        <begin position="9"/>
        <end position="29"/>
    </location>
</feature>
<feature type="transmembrane region" description="Helical" evidence="1">
    <location>
        <begin position="44"/>
        <end position="64"/>
    </location>
</feature>
<feature type="transmembrane region" description="Helical" evidence="1">
    <location>
        <begin position="71"/>
        <end position="91"/>
    </location>
</feature>
<feature type="transmembrane region" description="Helical" evidence="1">
    <location>
        <begin position="111"/>
        <end position="131"/>
    </location>
</feature>
<feature type="transmembrane region" description="Helical" evidence="1">
    <location>
        <begin position="143"/>
        <end position="163"/>
    </location>
</feature>
<feature type="transmembrane region" description="Helical" evidence="1">
    <location>
        <begin position="217"/>
        <end position="237"/>
    </location>
</feature>
<feature type="transmembrane region" description="Helical" evidence="1">
    <location>
        <begin position="244"/>
        <end position="264"/>
    </location>
</feature>
<feature type="transmembrane region" description="Helical" evidence="1">
    <location>
        <begin position="278"/>
        <end position="298"/>
    </location>
</feature>
<accession>Q2MI51</accession>
<name>CCSA_SOLLC</name>
<protein>
    <recommendedName>
        <fullName evidence="1">Cytochrome c biogenesis protein CcsA</fullName>
    </recommendedName>
</protein>
<organism>
    <name type="scientific">Solanum lycopersicum</name>
    <name type="common">Tomato</name>
    <name type="synonym">Lycopersicon esculentum</name>
    <dbReference type="NCBI Taxonomy" id="4081"/>
    <lineage>
        <taxon>Eukaryota</taxon>
        <taxon>Viridiplantae</taxon>
        <taxon>Streptophyta</taxon>
        <taxon>Embryophyta</taxon>
        <taxon>Tracheophyta</taxon>
        <taxon>Spermatophyta</taxon>
        <taxon>Magnoliopsida</taxon>
        <taxon>eudicotyledons</taxon>
        <taxon>Gunneridae</taxon>
        <taxon>Pentapetalae</taxon>
        <taxon>asterids</taxon>
        <taxon>lamiids</taxon>
        <taxon>Solanales</taxon>
        <taxon>Solanaceae</taxon>
        <taxon>Solanoideae</taxon>
        <taxon>Solaneae</taxon>
        <taxon>Solanum</taxon>
        <taxon>Solanum subgen. Lycopersicon</taxon>
    </lineage>
</organism>
<proteinExistence type="inferred from homology"/>
<evidence type="ECO:0000255" key="1">
    <source>
        <dbReference type="HAMAP-Rule" id="MF_01391"/>
    </source>
</evidence>
<geneLocation type="chloroplast"/>
<sequence>MIFSTLEHILTHISFSIVSIVITIHLITFLVDEIVKLYDSSEKGIIVTFFCITGLLVTRWVSSGHFPLSDLYESLIFLSWSFSLIHIIPYFKKNVLILSKITGPSAILTQGFATSGILTEIHQSGILVPALQSEWLIMHVSMMILGYAALLCGSLLSVALLVITFRKNRKLFSKSNVFLNESFFLGENVVENTSFFCTKNYYRSQLIQQLDYWSYRVISLGFTFLTIGILSGAVWANEAWGSYWNWDPKETWAFITWIVFAIYLHTRTNRNLRGPNSAIVASIGFLIIWICYFGVNLLGIGLHSYGSFPSTFN</sequence>